<sequence>MLPSIAKHAALHQVNPLKKHGQNFIFDSSLCDKIVRASNLAENSRVLEIGPGTGGLTRSILQKNPESLTVIETDARCLPLLNEIKEYYPNLNIIKQDALKINLTDLSYDIVNSVGFAYKKREVKPITNRRANDIGESKSIDYKVTIISNLPYHIGTELVIRWLKEARLITSMTLMLQKEVVERICAIPSTKAYGRLSVICQLIAKVEKCFDVAPTAFYPPPKVYSAIVKLIPLENPPSIALINKVEQITKLAFAGRRKMIKSSLKNLVPNIYEVLTQLKINDNYRAENLAPQDYLRIAEIL</sequence>
<accession>Q92GV0</accession>
<keyword id="KW-0963">Cytoplasm</keyword>
<keyword id="KW-0489">Methyltransferase</keyword>
<keyword id="KW-0694">RNA-binding</keyword>
<keyword id="KW-0698">rRNA processing</keyword>
<keyword id="KW-0949">S-adenosyl-L-methionine</keyword>
<keyword id="KW-0808">Transferase</keyword>
<proteinExistence type="inferred from homology"/>
<dbReference type="EC" id="2.1.1.182" evidence="1"/>
<dbReference type="EMBL" id="AE006914">
    <property type="protein sequence ID" value="AAL03560.1"/>
    <property type="status" value="ALT_INIT"/>
    <property type="molecule type" value="Genomic_DNA"/>
</dbReference>
<dbReference type="PIR" id="F97827">
    <property type="entry name" value="F97827"/>
</dbReference>
<dbReference type="RefSeq" id="WP_041471738.1">
    <property type="nucleotide sequence ID" value="NC_003103.1"/>
</dbReference>
<dbReference type="SMR" id="Q92GV0"/>
<dbReference type="GeneID" id="928163"/>
<dbReference type="KEGG" id="rco:RC1022"/>
<dbReference type="PATRIC" id="fig|272944.4.peg.1164"/>
<dbReference type="HOGENOM" id="CLU_041220_0_1_5"/>
<dbReference type="Proteomes" id="UP000000816">
    <property type="component" value="Chromosome"/>
</dbReference>
<dbReference type="GO" id="GO:0005737">
    <property type="term" value="C:cytoplasm"/>
    <property type="evidence" value="ECO:0007669"/>
    <property type="project" value="UniProtKB-SubCell"/>
</dbReference>
<dbReference type="GO" id="GO:0052908">
    <property type="term" value="F:16S rRNA (adenine(1518)-N(6)/adenine(1519)-N(6))-dimethyltransferase activity"/>
    <property type="evidence" value="ECO:0007669"/>
    <property type="project" value="UniProtKB-EC"/>
</dbReference>
<dbReference type="GO" id="GO:0003723">
    <property type="term" value="F:RNA binding"/>
    <property type="evidence" value="ECO:0007669"/>
    <property type="project" value="UniProtKB-KW"/>
</dbReference>
<dbReference type="CDD" id="cd02440">
    <property type="entry name" value="AdoMet_MTases"/>
    <property type="match status" value="1"/>
</dbReference>
<dbReference type="FunFam" id="1.10.8.100:FF:000012">
    <property type="entry name" value="Ribosomal RNA small subunit methyltransferase A"/>
    <property type="match status" value="1"/>
</dbReference>
<dbReference type="Gene3D" id="1.10.8.100">
    <property type="entry name" value="Ribosomal RNA adenine dimethylase-like, domain 2"/>
    <property type="match status" value="1"/>
</dbReference>
<dbReference type="Gene3D" id="3.40.50.150">
    <property type="entry name" value="Vaccinia Virus protein VP39"/>
    <property type="match status" value="1"/>
</dbReference>
<dbReference type="HAMAP" id="MF_00607">
    <property type="entry name" value="16SrRNA_methyltr_A"/>
    <property type="match status" value="1"/>
</dbReference>
<dbReference type="InterPro" id="IPR001737">
    <property type="entry name" value="KsgA/Erm"/>
</dbReference>
<dbReference type="InterPro" id="IPR022436">
    <property type="entry name" value="RPE2"/>
</dbReference>
<dbReference type="InterPro" id="IPR023165">
    <property type="entry name" value="rRNA_Ade_diMease-like_C"/>
</dbReference>
<dbReference type="InterPro" id="IPR020596">
    <property type="entry name" value="rRNA_Ade_Mease_Trfase_CS"/>
</dbReference>
<dbReference type="InterPro" id="IPR020598">
    <property type="entry name" value="rRNA_Ade_methylase_Trfase_N"/>
</dbReference>
<dbReference type="InterPro" id="IPR011530">
    <property type="entry name" value="rRNA_adenine_dimethylase"/>
</dbReference>
<dbReference type="InterPro" id="IPR029063">
    <property type="entry name" value="SAM-dependent_MTases_sf"/>
</dbReference>
<dbReference type="NCBIfam" id="TIGR00755">
    <property type="entry name" value="ksgA"/>
    <property type="match status" value="1"/>
</dbReference>
<dbReference type="NCBIfam" id="TIGR03774">
    <property type="entry name" value="RPE2"/>
    <property type="match status" value="1"/>
</dbReference>
<dbReference type="PANTHER" id="PTHR11727">
    <property type="entry name" value="DIMETHYLADENOSINE TRANSFERASE"/>
    <property type="match status" value="1"/>
</dbReference>
<dbReference type="PANTHER" id="PTHR11727:SF7">
    <property type="entry name" value="DIMETHYLADENOSINE TRANSFERASE-RELATED"/>
    <property type="match status" value="1"/>
</dbReference>
<dbReference type="Pfam" id="PF00398">
    <property type="entry name" value="RrnaAD"/>
    <property type="match status" value="1"/>
</dbReference>
<dbReference type="SMART" id="SM00650">
    <property type="entry name" value="rADc"/>
    <property type="match status" value="1"/>
</dbReference>
<dbReference type="SUPFAM" id="SSF53335">
    <property type="entry name" value="S-adenosyl-L-methionine-dependent methyltransferases"/>
    <property type="match status" value="1"/>
</dbReference>
<dbReference type="PROSITE" id="PS01131">
    <property type="entry name" value="RRNA_A_DIMETH"/>
    <property type="match status" value="1"/>
</dbReference>
<dbReference type="PROSITE" id="PS51689">
    <property type="entry name" value="SAM_RNA_A_N6_MT"/>
    <property type="match status" value="1"/>
</dbReference>
<comment type="function">
    <text evidence="1">Specifically dimethylates two adjacent adenosines (A1518 and A1519) in the loop of a conserved hairpin near the 3'-end of 16S rRNA in the 30S particle. May play a critical role in biogenesis of 30S subunits.</text>
</comment>
<comment type="catalytic activity">
    <reaction evidence="1">
        <text>adenosine(1518)/adenosine(1519) in 16S rRNA + 4 S-adenosyl-L-methionine = N(6)-dimethyladenosine(1518)/N(6)-dimethyladenosine(1519) in 16S rRNA + 4 S-adenosyl-L-homocysteine + 4 H(+)</text>
        <dbReference type="Rhea" id="RHEA:19609"/>
        <dbReference type="Rhea" id="RHEA-COMP:10232"/>
        <dbReference type="Rhea" id="RHEA-COMP:10233"/>
        <dbReference type="ChEBI" id="CHEBI:15378"/>
        <dbReference type="ChEBI" id="CHEBI:57856"/>
        <dbReference type="ChEBI" id="CHEBI:59789"/>
        <dbReference type="ChEBI" id="CHEBI:74411"/>
        <dbReference type="ChEBI" id="CHEBI:74493"/>
        <dbReference type="EC" id="2.1.1.182"/>
    </reaction>
</comment>
<comment type="subcellular location">
    <subcellularLocation>
        <location evidence="1">Cytoplasm</location>
    </subcellularLocation>
</comment>
<comment type="similarity">
    <text evidence="1">Belongs to the class I-like SAM-binding methyltransferase superfamily. rRNA adenine N(6)-methyltransferase family. RsmA subfamily.</text>
</comment>
<comment type="sequence caution" evidence="2">
    <conflict type="erroneous initiation">
        <sequence resource="EMBL-CDS" id="AAL03560"/>
    </conflict>
</comment>
<name>RSMA_RICCN</name>
<feature type="chain" id="PRO_0000101594" description="Ribosomal RNA small subunit methyltransferase A">
    <location>
        <begin position="1"/>
        <end position="301"/>
    </location>
</feature>
<feature type="binding site" evidence="1">
    <location>
        <position position="23"/>
    </location>
    <ligand>
        <name>S-adenosyl-L-methionine</name>
        <dbReference type="ChEBI" id="CHEBI:59789"/>
    </ligand>
</feature>
<feature type="binding site" evidence="1">
    <location>
        <position position="25"/>
    </location>
    <ligand>
        <name>S-adenosyl-L-methionine</name>
        <dbReference type="ChEBI" id="CHEBI:59789"/>
    </ligand>
</feature>
<feature type="binding site" evidence="1">
    <location>
        <position position="50"/>
    </location>
    <ligand>
        <name>S-adenosyl-L-methionine</name>
        <dbReference type="ChEBI" id="CHEBI:59789"/>
    </ligand>
</feature>
<feature type="binding site" evidence="1">
    <location>
        <position position="72"/>
    </location>
    <ligand>
        <name>S-adenosyl-L-methionine</name>
        <dbReference type="ChEBI" id="CHEBI:59789"/>
    </ligand>
</feature>
<feature type="binding site" evidence="1">
    <location>
        <position position="97"/>
    </location>
    <ligand>
        <name>S-adenosyl-L-methionine</name>
        <dbReference type="ChEBI" id="CHEBI:59789"/>
    </ligand>
</feature>
<feature type="binding site" evidence="1">
    <location>
        <position position="149"/>
    </location>
    <ligand>
        <name>S-adenosyl-L-methionine</name>
        <dbReference type="ChEBI" id="CHEBI:59789"/>
    </ligand>
</feature>
<protein>
    <recommendedName>
        <fullName evidence="1">Ribosomal RNA small subunit methyltransferase A</fullName>
        <ecNumber evidence="1">2.1.1.182</ecNumber>
    </recommendedName>
    <alternativeName>
        <fullName evidence="1">16S rRNA (adenine(1518)-N(6)/adenine(1519)-N(6))-dimethyltransferase</fullName>
    </alternativeName>
    <alternativeName>
        <fullName evidence="1">16S rRNA dimethyladenosine transferase</fullName>
    </alternativeName>
    <alternativeName>
        <fullName evidence="1">16S rRNA dimethylase</fullName>
    </alternativeName>
    <alternativeName>
        <fullName evidence="1">S-adenosylmethionine-6-N', N'-adenosyl(rRNA) dimethyltransferase</fullName>
    </alternativeName>
</protein>
<organism>
    <name type="scientific">Rickettsia conorii (strain ATCC VR-613 / Malish 7)</name>
    <dbReference type="NCBI Taxonomy" id="272944"/>
    <lineage>
        <taxon>Bacteria</taxon>
        <taxon>Pseudomonadati</taxon>
        <taxon>Pseudomonadota</taxon>
        <taxon>Alphaproteobacteria</taxon>
        <taxon>Rickettsiales</taxon>
        <taxon>Rickettsiaceae</taxon>
        <taxon>Rickettsieae</taxon>
        <taxon>Rickettsia</taxon>
        <taxon>spotted fever group</taxon>
    </lineage>
</organism>
<gene>
    <name evidence="1" type="primary">rsmA</name>
    <name evidence="1" type="synonym">ksgA</name>
    <name type="ordered locus">RC1022</name>
</gene>
<reference key="1">
    <citation type="journal article" date="2001" name="Science">
        <title>Mechanisms of evolution in Rickettsia conorii and R. prowazekii.</title>
        <authorList>
            <person name="Ogata H."/>
            <person name="Audic S."/>
            <person name="Renesto-Audiffren P."/>
            <person name="Fournier P.-E."/>
            <person name="Barbe V."/>
            <person name="Samson D."/>
            <person name="Roux V."/>
            <person name="Cossart P."/>
            <person name="Weissenbach J."/>
            <person name="Claverie J.-M."/>
            <person name="Raoult D."/>
        </authorList>
    </citation>
    <scope>NUCLEOTIDE SEQUENCE [LARGE SCALE GENOMIC DNA]</scope>
    <source>
        <strain>ATCC VR-613 / Malish 7</strain>
    </source>
</reference>
<evidence type="ECO:0000255" key="1">
    <source>
        <dbReference type="HAMAP-Rule" id="MF_00607"/>
    </source>
</evidence>
<evidence type="ECO:0000305" key="2"/>